<accession>O28685</accession>
<protein>
    <recommendedName>
        <fullName>Ribulose bisphosphate carboxylase-like protein</fullName>
        <shortName>RuBisCO-like protein</shortName>
    </recommendedName>
</protein>
<proteinExistence type="inferred from homology"/>
<gene>
    <name type="ordered locus">AF_1587</name>
</gene>
<dbReference type="EMBL" id="AE000782">
    <property type="protein sequence ID" value="AAB89661.1"/>
    <property type="molecule type" value="Genomic_DNA"/>
</dbReference>
<dbReference type="PIR" id="B69448">
    <property type="entry name" value="B69448"/>
</dbReference>
<dbReference type="RefSeq" id="WP_010879084.1">
    <property type="nucleotide sequence ID" value="NC_000917.1"/>
</dbReference>
<dbReference type="SMR" id="O28685"/>
<dbReference type="STRING" id="224325.AF_1587"/>
<dbReference type="PaxDb" id="224325-AF_1587"/>
<dbReference type="DNASU" id="1484815"/>
<dbReference type="EnsemblBacteria" id="AAB89661">
    <property type="protein sequence ID" value="AAB89661"/>
    <property type="gene ID" value="AF_1587"/>
</dbReference>
<dbReference type="GeneID" id="1484815"/>
<dbReference type="KEGG" id="afu:AF_1587"/>
<dbReference type="eggNOG" id="arCOG04443">
    <property type="taxonomic scope" value="Archaea"/>
</dbReference>
<dbReference type="HOGENOM" id="CLU_031450_3_1_2"/>
<dbReference type="OrthoDB" id="52787at2157"/>
<dbReference type="PhylomeDB" id="O28685"/>
<dbReference type="Proteomes" id="UP000002199">
    <property type="component" value="Chromosome"/>
</dbReference>
<dbReference type="GO" id="GO:0000287">
    <property type="term" value="F:magnesium ion binding"/>
    <property type="evidence" value="ECO:0007669"/>
    <property type="project" value="InterPro"/>
</dbReference>
<dbReference type="GO" id="GO:0016984">
    <property type="term" value="F:ribulose-bisphosphate carboxylase activity"/>
    <property type="evidence" value="ECO:0007669"/>
    <property type="project" value="InterPro"/>
</dbReference>
<dbReference type="GO" id="GO:0015977">
    <property type="term" value="P:carbon fixation"/>
    <property type="evidence" value="ECO:0007669"/>
    <property type="project" value="InterPro"/>
</dbReference>
<dbReference type="CDD" id="cd08205">
    <property type="entry name" value="RuBisCO_IV_RLP"/>
    <property type="match status" value="1"/>
</dbReference>
<dbReference type="Gene3D" id="3.20.20.110">
    <property type="entry name" value="Ribulose bisphosphate carboxylase, large subunit, C-terminal domain"/>
    <property type="match status" value="1"/>
</dbReference>
<dbReference type="Gene3D" id="3.30.70.150">
    <property type="entry name" value="RuBisCO large subunit, N-terminal domain"/>
    <property type="match status" value="1"/>
</dbReference>
<dbReference type="InterPro" id="IPR033966">
    <property type="entry name" value="RuBisCO"/>
</dbReference>
<dbReference type="InterPro" id="IPR000685">
    <property type="entry name" value="RuBisCO_lsu_C"/>
</dbReference>
<dbReference type="InterPro" id="IPR036376">
    <property type="entry name" value="RuBisCO_lsu_C_sf"/>
</dbReference>
<dbReference type="InterPro" id="IPR017443">
    <property type="entry name" value="RuBisCO_lsu_fd_N"/>
</dbReference>
<dbReference type="InterPro" id="IPR036422">
    <property type="entry name" value="RuBisCO_lsu_N_sf"/>
</dbReference>
<dbReference type="PANTHER" id="PTHR42704">
    <property type="entry name" value="RIBULOSE BISPHOSPHATE CARBOXYLASE"/>
    <property type="match status" value="1"/>
</dbReference>
<dbReference type="PANTHER" id="PTHR42704:SF17">
    <property type="entry name" value="RIBULOSE BISPHOSPHATE CARBOXYLASE LARGE CHAIN"/>
    <property type="match status" value="1"/>
</dbReference>
<dbReference type="Pfam" id="PF00016">
    <property type="entry name" value="RuBisCO_large"/>
    <property type="match status" value="1"/>
</dbReference>
<dbReference type="Pfam" id="PF02788">
    <property type="entry name" value="RuBisCO_large_N"/>
    <property type="match status" value="1"/>
</dbReference>
<dbReference type="SFLD" id="SFLDS00014">
    <property type="entry name" value="RuBisCO"/>
    <property type="match status" value="1"/>
</dbReference>
<dbReference type="SFLD" id="SFLDG00301">
    <property type="entry name" value="RuBisCO-like_proteins"/>
    <property type="match status" value="1"/>
</dbReference>
<dbReference type="SUPFAM" id="SSF51649">
    <property type="entry name" value="RuBisCo, C-terminal domain"/>
    <property type="match status" value="1"/>
</dbReference>
<dbReference type="SUPFAM" id="SSF54966">
    <property type="entry name" value="RuBisCO, large subunit, small (N-terminal) domain"/>
    <property type="match status" value="1"/>
</dbReference>
<evidence type="ECO:0000250" key="1"/>
<evidence type="ECO:0000269" key="2">
    <source>
    </source>
</evidence>
<evidence type="ECO:0000305" key="3"/>
<comment type="function">
    <text evidence="1 2">May be involved in sulfur metabolism and oxidative stress response. Does not show RuBisCO activity (By similarity).</text>
</comment>
<comment type="cofactor">
    <cofactor evidence="1">
        <name>Mg(2+)</name>
        <dbReference type="ChEBI" id="CHEBI:18420"/>
    </cofactor>
    <text evidence="1">Binds 1 Mg(2+) ion per subunit.</text>
</comment>
<comment type="subunit">
    <text evidence="1">Homodimer.</text>
</comment>
<comment type="similarity">
    <text evidence="3">Belongs to the RuBisCO large chain family. Type IV subfamily.</text>
</comment>
<reference key="1">
    <citation type="journal article" date="1997" name="Nature">
        <title>The complete genome sequence of the hyperthermophilic, sulphate-reducing archaeon Archaeoglobus fulgidus.</title>
        <authorList>
            <person name="Klenk H.-P."/>
            <person name="Clayton R.A."/>
            <person name="Tomb J.-F."/>
            <person name="White O."/>
            <person name="Nelson K.E."/>
            <person name="Ketchum K.A."/>
            <person name="Dodson R.J."/>
            <person name="Gwinn M.L."/>
            <person name="Hickey E.K."/>
            <person name="Peterson J.D."/>
            <person name="Richardson D.L."/>
            <person name="Kerlavage A.R."/>
            <person name="Graham D.E."/>
            <person name="Kyrpides N.C."/>
            <person name="Fleischmann R.D."/>
            <person name="Quackenbush J."/>
            <person name="Lee N.H."/>
            <person name="Sutton G.G."/>
            <person name="Gill S.R."/>
            <person name="Kirkness E.F."/>
            <person name="Dougherty B.A."/>
            <person name="McKenney K."/>
            <person name="Adams M.D."/>
            <person name="Loftus B.J."/>
            <person name="Peterson S.N."/>
            <person name="Reich C.I."/>
            <person name="McNeil L.K."/>
            <person name="Badger J.H."/>
            <person name="Glodek A."/>
            <person name="Zhou L."/>
            <person name="Overbeek R."/>
            <person name="Gocayne J.D."/>
            <person name="Weidman J.F."/>
            <person name="McDonald L.A."/>
            <person name="Utterback T.R."/>
            <person name="Cotton M.D."/>
            <person name="Spriggs T."/>
            <person name="Artiach P."/>
            <person name="Kaine B.P."/>
            <person name="Sykes S.M."/>
            <person name="Sadow P.W."/>
            <person name="D'Andrea K.P."/>
            <person name="Bowman C."/>
            <person name="Fujii C."/>
            <person name="Garland S.A."/>
            <person name="Mason T.M."/>
            <person name="Olsen G.J."/>
            <person name="Fraser C.M."/>
            <person name="Smith H.O."/>
            <person name="Woese C.R."/>
            <person name="Venter J.C."/>
        </authorList>
    </citation>
    <scope>NUCLEOTIDE SEQUENCE [LARGE SCALE GENOMIC DNA]</scope>
    <source>
        <strain>ATCC 49558 / DSM 4304 / JCM 9628 / NBRC 100126 / VC-16</strain>
    </source>
</reference>
<reference key="2">
    <citation type="journal article" date="2001" name="Proc. Natl. Acad. Sci. U.S.A.">
        <title>A ribulose-1,5-bisphosphate carboxylase/oxygenase (RubisCO)-like protein from Chlorobium tepidum that is involved with sulfur metabolism and the response to oxidative stress.</title>
        <authorList>
            <person name="Hanson T.E."/>
            <person name="Tabita F.R."/>
        </authorList>
    </citation>
    <scope>FUNCTION</scope>
</reference>
<sequence>MQLGVRLRFQKFEYPEANPEALPEGIDPEEYIIGTYYMSFPKGMNPFEITQVLALEQSTGTWLPVPGETPEVRRKHVAKVVGVYEIPDYEIMVPQEVDWRNFIVQIAFPWRNIGSKLSMLFSTVVGNISMAPKLKLLDLRFPKEFVKGFKGPKFGIEGVRDVLGVKDRPLLNNMIKPDVYSPPDLGAKLAYEVARGGVDIIKDDELLANPEFNRIEERVPKFMEAIDRADEEKGEKTLYAVNVTADLPEVLENAERAIELGANCLLVNYLATGFPVLRALAEDESIKVPIMAHMDVAGAYYVSPISGVRSTLILGKLPRLAGADIVVYPAPYGKAPMMEEKYIEVAKQHRYPFYHIKPCFPMPSGGIAPIMVPKLVNTLGKDFVVAAGGGIHAHPDGPAAGARAFRQAIDAAMQGYTDLRKYAEENNLQELLKALQL</sequence>
<organism>
    <name type="scientific">Archaeoglobus fulgidus (strain ATCC 49558 / DSM 4304 / JCM 9628 / NBRC 100126 / VC-16)</name>
    <dbReference type="NCBI Taxonomy" id="224325"/>
    <lineage>
        <taxon>Archaea</taxon>
        <taxon>Methanobacteriati</taxon>
        <taxon>Methanobacteriota</taxon>
        <taxon>Archaeoglobi</taxon>
        <taxon>Archaeoglobales</taxon>
        <taxon>Archaeoglobaceae</taxon>
        <taxon>Archaeoglobus</taxon>
    </lineage>
</organism>
<feature type="chain" id="PRO_0000062686" description="Ribulose bisphosphate carboxylase-like protein">
    <location>
        <begin position="1"/>
        <end position="437"/>
    </location>
</feature>
<feature type="active site" description="Proton acceptor" evidence="1">
    <location>
        <position position="176"/>
    </location>
</feature>
<feature type="active site" description="Proton acceptor" evidence="1">
    <location>
        <position position="293"/>
    </location>
</feature>
<feature type="binding site" description="via carbamate group" evidence="1">
    <location>
        <position position="202"/>
    </location>
    <ligand>
        <name>Mg(2+)</name>
        <dbReference type="ChEBI" id="CHEBI:18420"/>
    </ligand>
</feature>
<feature type="binding site" evidence="1">
    <location>
        <position position="204"/>
    </location>
    <ligand>
        <name>Mg(2+)</name>
        <dbReference type="ChEBI" id="CHEBI:18420"/>
    </ligand>
</feature>
<feature type="binding site" evidence="1">
    <location>
        <position position="205"/>
    </location>
    <ligand>
        <name>Mg(2+)</name>
        <dbReference type="ChEBI" id="CHEBI:18420"/>
    </ligand>
</feature>
<feature type="modified residue" description="N6-carboxylysine" evidence="1">
    <location>
        <position position="202"/>
    </location>
</feature>
<name>RBLL_ARCFU</name>
<keyword id="KW-0460">Magnesium</keyword>
<keyword id="KW-0479">Metal-binding</keyword>
<keyword id="KW-1185">Reference proteome</keyword>